<dbReference type="EC" id="6.3.3.1" evidence="1"/>
<dbReference type="EMBL" id="CP000109">
    <property type="protein sequence ID" value="ABB41641.1"/>
    <property type="molecule type" value="Genomic_DNA"/>
</dbReference>
<dbReference type="SMR" id="Q31GT2"/>
<dbReference type="STRING" id="317025.Tcr_1046"/>
<dbReference type="KEGG" id="tcx:Tcr_1046"/>
<dbReference type="eggNOG" id="COG0150">
    <property type="taxonomic scope" value="Bacteria"/>
</dbReference>
<dbReference type="HOGENOM" id="CLU_047116_0_0_6"/>
<dbReference type="OrthoDB" id="9777881at2"/>
<dbReference type="UniPathway" id="UPA00074">
    <property type="reaction ID" value="UER00129"/>
</dbReference>
<dbReference type="GO" id="GO:0005829">
    <property type="term" value="C:cytosol"/>
    <property type="evidence" value="ECO:0007669"/>
    <property type="project" value="TreeGrafter"/>
</dbReference>
<dbReference type="GO" id="GO:0005524">
    <property type="term" value="F:ATP binding"/>
    <property type="evidence" value="ECO:0007669"/>
    <property type="project" value="UniProtKB-KW"/>
</dbReference>
<dbReference type="GO" id="GO:0004637">
    <property type="term" value="F:phosphoribosylamine-glycine ligase activity"/>
    <property type="evidence" value="ECO:0007669"/>
    <property type="project" value="TreeGrafter"/>
</dbReference>
<dbReference type="GO" id="GO:0004641">
    <property type="term" value="F:phosphoribosylformylglycinamidine cyclo-ligase activity"/>
    <property type="evidence" value="ECO:0007669"/>
    <property type="project" value="UniProtKB-UniRule"/>
</dbReference>
<dbReference type="GO" id="GO:0006189">
    <property type="term" value="P:'de novo' IMP biosynthetic process"/>
    <property type="evidence" value="ECO:0007669"/>
    <property type="project" value="UniProtKB-UniRule"/>
</dbReference>
<dbReference type="GO" id="GO:0046084">
    <property type="term" value="P:adenine biosynthetic process"/>
    <property type="evidence" value="ECO:0007669"/>
    <property type="project" value="TreeGrafter"/>
</dbReference>
<dbReference type="CDD" id="cd02196">
    <property type="entry name" value="PurM"/>
    <property type="match status" value="1"/>
</dbReference>
<dbReference type="FunFam" id="3.30.1330.10:FF:000001">
    <property type="entry name" value="Phosphoribosylformylglycinamidine cyclo-ligase"/>
    <property type="match status" value="1"/>
</dbReference>
<dbReference type="FunFam" id="3.90.650.10:FF:000001">
    <property type="entry name" value="Phosphoribosylformylglycinamidine cyclo-ligase"/>
    <property type="match status" value="1"/>
</dbReference>
<dbReference type="Gene3D" id="3.90.650.10">
    <property type="entry name" value="PurM-like C-terminal domain"/>
    <property type="match status" value="1"/>
</dbReference>
<dbReference type="Gene3D" id="3.30.1330.10">
    <property type="entry name" value="PurM-like, N-terminal domain"/>
    <property type="match status" value="1"/>
</dbReference>
<dbReference type="HAMAP" id="MF_00741">
    <property type="entry name" value="AIRS"/>
    <property type="match status" value="1"/>
</dbReference>
<dbReference type="InterPro" id="IPR010918">
    <property type="entry name" value="PurM-like_C_dom"/>
</dbReference>
<dbReference type="InterPro" id="IPR036676">
    <property type="entry name" value="PurM-like_C_sf"/>
</dbReference>
<dbReference type="InterPro" id="IPR016188">
    <property type="entry name" value="PurM-like_N"/>
</dbReference>
<dbReference type="InterPro" id="IPR036921">
    <property type="entry name" value="PurM-like_N_sf"/>
</dbReference>
<dbReference type="InterPro" id="IPR004733">
    <property type="entry name" value="PurM_cligase"/>
</dbReference>
<dbReference type="NCBIfam" id="TIGR00878">
    <property type="entry name" value="purM"/>
    <property type="match status" value="1"/>
</dbReference>
<dbReference type="PANTHER" id="PTHR10520:SF12">
    <property type="entry name" value="TRIFUNCTIONAL PURINE BIOSYNTHETIC PROTEIN ADENOSINE-3"/>
    <property type="match status" value="1"/>
</dbReference>
<dbReference type="PANTHER" id="PTHR10520">
    <property type="entry name" value="TRIFUNCTIONAL PURINE BIOSYNTHETIC PROTEIN ADENOSINE-3-RELATED"/>
    <property type="match status" value="1"/>
</dbReference>
<dbReference type="Pfam" id="PF00586">
    <property type="entry name" value="AIRS"/>
    <property type="match status" value="1"/>
</dbReference>
<dbReference type="Pfam" id="PF02769">
    <property type="entry name" value="AIRS_C"/>
    <property type="match status" value="1"/>
</dbReference>
<dbReference type="SUPFAM" id="SSF56042">
    <property type="entry name" value="PurM C-terminal domain-like"/>
    <property type="match status" value="1"/>
</dbReference>
<dbReference type="SUPFAM" id="SSF55326">
    <property type="entry name" value="PurM N-terminal domain-like"/>
    <property type="match status" value="1"/>
</dbReference>
<gene>
    <name evidence="1" type="primary">purM</name>
    <name type="ordered locus">Tcr_1046</name>
</gene>
<name>PUR5_HYDCU</name>
<feature type="chain" id="PRO_0000258427" description="Phosphoribosylformylglycinamidine cyclo-ligase">
    <location>
        <begin position="1"/>
        <end position="347"/>
    </location>
</feature>
<protein>
    <recommendedName>
        <fullName evidence="1">Phosphoribosylformylglycinamidine cyclo-ligase</fullName>
        <ecNumber evidence="1">6.3.3.1</ecNumber>
    </recommendedName>
    <alternativeName>
        <fullName evidence="1">AIR synthase</fullName>
    </alternativeName>
    <alternativeName>
        <fullName evidence="1">AIRS</fullName>
    </alternativeName>
    <alternativeName>
        <fullName evidence="1">Phosphoribosyl-aminoimidazole synthetase</fullName>
    </alternativeName>
</protein>
<sequence length="347" mass="36929">MTKNNQSISYKDAGVDIDAGNALVEAIKPIAKATARPEVSTSLGGFGALFELPMDKYKNPLLVSGTDGVGTKLRLAIESGKHDQVGIDLVAMCVNDLIVQGAEPLFFLDYYATGKLDIYTARDVVAGIGEGCQQSGCALIGGETAEMPGMYPDGDYDLAGFCVGIVEKADLIDGTKVKAGDVLLGLASSGPHSNGYSLIRKIIEVNGANLNEECDGQPLIDALMAPTRIYVKSILALMKQIEIHAISHITGGGLLENLPRVMPNNTKAKVDTKSWNRPAVFDWIQTHGNVEFHEMHRTLNCGIGMVVVVDEKDQQAAIDALTAQGEVVSVIGKIESSESETPEVDLV</sequence>
<evidence type="ECO:0000255" key="1">
    <source>
        <dbReference type="HAMAP-Rule" id="MF_00741"/>
    </source>
</evidence>
<reference key="1">
    <citation type="journal article" date="2006" name="PLoS Biol.">
        <title>The genome of deep-sea vent chemolithoautotroph Thiomicrospira crunogena XCL-2.</title>
        <authorList>
            <person name="Scott K.M."/>
            <person name="Sievert S.M."/>
            <person name="Abril F.N."/>
            <person name="Ball L.A."/>
            <person name="Barrett C.J."/>
            <person name="Blake R.A."/>
            <person name="Boller A.J."/>
            <person name="Chain P.S.G."/>
            <person name="Clark J.A."/>
            <person name="Davis C.R."/>
            <person name="Detter C."/>
            <person name="Do K.F."/>
            <person name="Dobrinski K.P."/>
            <person name="Faza B.I."/>
            <person name="Fitzpatrick K.A."/>
            <person name="Freyermuth S.K."/>
            <person name="Harmer T.L."/>
            <person name="Hauser L.J."/>
            <person name="Huegler M."/>
            <person name="Kerfeld C.A."/>
            <person name="Klotz M.G."/>
            <person name="Kong W.W."/>
            <person name="Land M."/>
            <person name="Lapidus A."/>
            <person name="Larimer F.W."/>
            <person name="Longo D.L."/>
            <person name="Lucas S."/>
            <person name="Malfatti S.A."/>
            <person name="Massey S.E."/>
            <person name="Martin D.D."/>
            <person name="McCuddin Z."/>
            <person name="Meyer F."/>
            <person name="Moore J.L."/>
            <person name="Ocampo L.H. Jr."/>
            <person name="Paul J.H."/>
            <person name="Paulsen I.T."/>
            <person name="Reep D.K."/>
            <person name="Ren Q."/>
            <person name="Ross R.L."/>
            <person name="Sato P.Y."/>
            <person name="Thomas P."/>
            <person name="Tinkham L.E."/>
            <person name="Zeruth G.T."/>
        </authorList>
    </citation>
    <scope>NUCLEOTIDE SEQUENCE [LARGE SCALE GENOMIC DNA]</scope>
    <source>
        <strain>DSM 25203 / XCL-2</strain>
    </source>
</reference>
<organism>
    <name type="scientific">Hydrogenovibrio crunogenus (strain DSM 25203 / XCL-2)</name>
    <name type="common">Thiomicrospira crunogena</name>
    <dbReference type="NCBI Taxonomy" id="317025"/>
    <lineage>
        <taxon>Bacteria</taxon>
        <taxon>Pseudomonadati</taxon>
        <taxon>Pseudomonadota</taxon>
        <taxon>Gammaproteobacteria</taxon>
        <taxon>Thiotrichales</taxon>
        <taxon>Piscirickettsiaceae</taxon>
        <taxon>Hydrogenovibrio</taxon>
    </lineage>
</organism>
<accession>Q31GT2</accession>
<keyword id="KW-0067">ATP-binding</keyword>
<keyword id="KW-0963">Cytoplasm</keyword>
<keyword id="KW-0436">Ligase</keyword>
<keyword id="KW-0547">Nucleotide-binding</keyword>
<keyword id="KW-0658">Purine biosynthesis</keyword>
<comment type="catalytic activity">
    <reaction evidence="1">
        <text>2-formamido-N(1)-(5-O-phospho-beta-D-ribosyl)acetamidine + ATP = 5-amino-1-(5-phospho-beta-D-ribosyl)imidazole + ADP + phosphate + H(+)</text>
        <dbReference type="Rhea" id="RHEA:23032"/>
        <dbReference type="ChEBI" id="CHEBI:15378"/>
        <dbReference type="ChEBI" id="CHEBI:30616"/>
        <dbReference type="ChEBI" id="CHEBI:43474"/>
        <dbReference type="ChEBI" id="CHEBI:137981"/>
        <dbReference type="ChEBI" id="CHEBI:147287"/>
        <dbReference type="ChEBI" id="CHEBI:456216"/>
        <dbReference type="EC" id="6.3.3.1"/>
    </reaction>
</comment>
<comment type="pathway">
    <text evidence="1">Purine metabolism; IMP biosynthesis via de novo pathway; 5-amino-1-(5-phospho-D-ribosyl)imidazole from N(2)-formyl-N(1)-(5-phospho-D-ribosyl)glycinamide: step 2/2.</text>
</comment>
<comment type="subcellular location">
    <subcellularLocation>
        <location evidence="1">Cytoplasm</location>
    </subcellularLocation>
</comment>
<comment type="similarity">
    <text evidence="1">Belongs to the AIR synthase family.</text>
</comment>
<proteinExistence type="inferred from homology"/>